<name>AROE_HELPY</name>
<proteinExistence type="evidence at protein level"/>
<comment type="function">
    <text evidence="1">Involved in the biosynthesis of the chorismate, which leads to the biosynthesis of aromatic amino acids. Catalyzes the reversible NADPH linked reduction of 3-dehydroshikimate (DHSA) to yield shikimate (SA).</text>
</comment>
<comment type="catalytic activity">
    <reaction evidence="1">
        <text>shikimate + NADP(+) = 3-dehydroshikimate + NADPH + H(+)</text>
        <dbReference type="Rhea" id="RHEA:17737"/>
        <dbReference type="ChEBI" id="CHEBI:15378"/>
        <dbReference type="ChEBI" id="CHEBI:16630"/>
        <dbReference type="ChEBI" id="CHEBI:36208"/>
        <dbReference type="ChEBI" id="CHEBI:57783"/>
        <dbReference type="ChEBI" id="CHEBI:58349"/>
        <dbReference type="EC" id="1.1.1.25"/>
    </reaction>
</comment>
<comment type="pathway">
    <text evidence="1">Metabolic intermediate biosynthesis; chorismate biosynthesis; chorismate from D-erythrose 4-phosphate and phosphoenolpyruvate: step 4/7.</text>
</comment>
<comment type="subunit">
    <text evidence="1 2 3">Homodimer.</text>
</comment>
<comment type="similarity">
    <text evidence="1">Belongs to the shikimate dehydrogenase family.</text>
</comment>
<sequence length="263" mass="29273">MKLKSFGVFGNPIKHSKSPLIHNACFLTFQKELRFLGHYHPILLPLESHIKSEFLHLGLSGANVTLPFKERAFQVCDKIKGIALECGAVNTLVLENDELVGYNTDALGFYLSLKQKNYQNALILGAGGSAKALACELKKQGLQVSVLNRSSRGLDFFQRLGCDCFMEPPKSAFDLIINATSASLHNELPLNKEVLKGYFKEGKLAYDLAYGFLTPFLSLAKELKTPFQDGKDMLIYQAALSFEKFSASQIPYSKAFEVMRSVF</sequence>
<dbReference type="EC" id="1.1.1.25" evidence="1"/>
<dbReference type="EMBL" id="AE000511">
    <property type="protein sequence ID" value="AAD08294.1"/>
    <property type="molecule type" value="Genomic_DNA"/>
</dbReference>
<dbReference type="PIR" id="A64676">
    <property type="entry name" value="A64676"/>
</dbReference>
<dbReference type="RefSeq" id="NP_208041.1">
    <property type="nucleotide sequence ID" value="NC_000915.1"/>
</dbReference>
<dbReference type="RefSeq" id="WP_000769617.1">
    <property type="nucleotide sequence ID" value="NC_018939.1"/>
</dbReference>
<dbReference type="PDB" id="3PHG">
    <property type="method" value="X-ray"/>
    <property type="resolution" value="1.57 A"/>
    <property type="chains" value="A/B=1-263"/>
</dbReference>
<dbReference type="PDB" id="3PHH">
    <property type="method" value="X-ray"/>
    <property type="resolution" value="1.42 A"/>
    <property type="chains" value="A=1-263"/>
</dbReference>
<dbReference type="PDB" id="3PHI">
    <property type="method" value="X-ray"/>
    <property type="resolution" value="2.04 A"/>
    <property type="chains" value="A/B=1-263"/>
</dbReference>
<dbReference type="PDB" id="3PHJ">
    <property type="method" value="X-ray"/>
    <property type="resolution" value="2.30 A"/>
    <property type="chains" value="A/B=1-263"/>
</dbReference>
<dbReference type="PDB" id="4FOO">
    <property type="method" value="X-ray"/>
    <property type="resolution" value="2.55 A"/>
    <property type="chains" value="A/B=1-263"/>
</dbReference>
<dbReference type="PDB" id="4FOS">
    <property type="method" value="X-ray"/>
    <property type="resolution" value="1.72 A"/>
    <property type="chains" value="A=1-263"/>
</dbReference>
<dbReference type="PDB" id="4FPX">
    <property type="method" value="X-ray"/>
    <property type="resolution" value="2.40 A"/>
    <property type="chains" value="A/B=1-263"/>
</dbReference>
<dbReference type="PDB" id="4FQ8">
    <property type="method" value="X-ray"/>
    <property type="resolution" value="2.07 A"/>
    <property type="chains" value="A/B=1-263"/>
</dbReference>
<dbReference type="PDB" id="4FR5">
    <property type="method" value="X-ray"/>
    <property type="resolution" value="2.20 A"/>
    <property type="chains" value="A/B=1-263"/>
</dbReference>
<dbReference type="PDB" id="4FSH">
    <property type="method" value="X-ray"/>
    <property type="resolution" value="2.85 A"/>
    <property type="chains" value="A/B=1-263"/>
</dbReference>
<dbReference type="PDBsum" id="3PHG"/>
<dbReference type="PDBsum" id="3PHH"/>
<dbReference type="PDBsum" id="3PHI"/>
<dbReference type="PDBsum" id="3PHJ"/>
<dbReference type="PDBsum" id="4FOO"/>
<dbReference type="PDBsum" id="4FOS"/>
<dbReference type="PDBsum" id="4FPX"/>
<dbReference type="PDBsum" id="4FQ8"/>
<dbReference type="PDBsum" id="4FR5"/>
<dbReference type="PDBsum" id="4FSH"/>
<dbReference type="SMR" id="P56119"/>
<dbReference type="FunCoup" id="P56119">
    <property type="interactions" value="109"/>
</dbReference>
<dbReference type="IntAct" id="P56119">
    <property type="interactions" value="1"/>
</dbReference>
<dbReference type="STRING" id="85962.HP_1249"/>
<dbReference type="PaxDb" id="85962-C694_06455"/>
<dbReference type="EnsemblBacteria" id="AAD08294">
    <property type="protein sequence ID" value="AAD08294"/>
    <property type="gene ID" value="HP_1249"/>
</dbReference>
<dbReference type="KEGG" id="heo:C694_06455"/>
<dbReference type="KEGG" id="hpy:HP_1249"/>
<dbReference type="PATRIC" id="fig|85962.47.peg.1341"/>
<dbReference type="eggNOG" id="COG0169">
    <property type="taxonomic scope" value="Bacteria"/>
</dbReference>
<dbReference type="InParanoid" id="P56119"/>
<dbReference type="OrthoDB" id="9792692at2"/>
<dbReference type="PhylomeDB" id="P56119"/>
<dbReference type="UniPathway" id="UPA00053">
    <property type="reaction ID" value="UER00087"/>
</dbReference>
<dbReference type="EvolutionaryTrace" id="P56119"/>
<dbReference type="Proteomes" id="UP000000429">
    <property type="component" value="Chromosome"/>
</dbReference>
<dbReference type="GO" id="GO:0005829">
    <property type="term" value="C:cytosol"/>
    <property type="evidence" value="ECO:0000318"/>
    <property type="project" value="GO_Central"/>
</dbReference>
<dbReference type="GO" id="GO:0050661">
    <property type="term" value="F:NADP binding"/>
    <property type="evidence" value="ECO:0000318"/>
    <property type="project" value="GO_Central"/>
</dbReference>
<dbReference type="GO" id="GO:0004764">
    <property type="term" value="F:shikimate 3-dehydrogenase (NADP+) activity"/>
    <property type="evidence" value="ECO:0000318"/>
    <property type="project" value="GO_Central"/>
</dbReference>
<dbReference type="GO" id="GO:0008652">
    <property type="term" value="P:amino acid biosynthetic process"/>
    <property type="evidence" value="ECO:0007669"/>
    <property type="project" value="UniProtKB-KW"/>
</dbReference>
<dbReference type="GO" id="GO:0009073">
    <property type="term" value="P:aromatic amino acid family biosynthetic process"/>
    <property type="evidence" value="ECO:0007669"/>
    <property type="project" value="UniProtKB-KW"/>
</dbReference>
<dbReference type="GO" id="GO:0009423">
    <property type="term" value="P:chorismate biosynthetic process"/>
    <property type="evidence" value="ECO:0000318"/>
    <property type="project" value="GO_Central"/>
</dbReference>
<dbReference type="GO" id="GO:0019632">
    <property type="term" value="P:shikimate metabolic process"/>
    <property type="evidence" value="ECO:0000318"/>
    <property type="project" value="GO_Central"/>
</dbReference>
<dbReference type="CDD" id="cd01065">
    <property type="entry name" value="NAD_bind_Shikimate_DH"/>
    <property type="match status" value="1"/>
</dbReference>
<dbReference type="FunFam" id="3.40.50.10860:FF:000025">
    <property type="entry name" value="Shikimate dehydrogenase (NADP(+))"/>
    <property type="match status" value="1"/>
</dbReference>
<dbReference type="FunFam" id="3.40.50.720:FF:000665">
    <property type="entry name" value="Shikimate dehydrogenase (NADP(+))"/>
    <property type="match status" value="1"/>
</dbReference>
<dbReference type="Gene3D" id="3.40.50.10860">
    <property type="entry name" value="Leucine Dehydrogenase, chain A, domain 1"/>
    <property type="match status" value="1"/>
</dbReference>
<dbReference type="Gene3D" id="3.40.50.720">
    <property type="entry name" value="NAD(P)-binding Rossmann-like Domain"/>
    <property type="match status" value="1"/>
</dbReference>
<dbReference type="HAMAP" id="MF_00222">
    <property type="entry name" value="Shikimate_DH_AroE"/>
    <property type="match status" value="1"/>
</dbReference>
<dbReference type="InterPro" id="IPR046346">
    <property type="entry name" value="Aminoacid_DH-like_N_sf"/>
</dbReference>
<dbReference type="InterPro" id="IPR036291">
    <property type="entry name" value="NAD(P)-bd_dom_sf"/>
</dbReference>
<dbReference type="InterPro" id="IPR011342">
    <property type="entry name" value="Shikimate_DH"/>
</dbReference>
<dbReference type="InterPro" id="IPR013708">
    <property type="entry name" value="Shikimate_DH-bd_N"/>
</dbReference>
<dbReference type="InterPro" id="IPR022893">
    <property type="entry name" value="Shikimate_DH_fam"/>
</dbReference>
<dbReference type="NCBIfam" id="TIGR00507">
    <property type="entry name" value="aroE"/>
    <property type="match status" value="1"/>
</dbReference>
<dbReference type="NCBIfam" id="NF001316">
    <property type="entry name" value="PRK00258.2-5"/>
    <property type="match status" value="1"/>
</dbReference>
<dbReference type="PANTHER" id="PTHR21089:SF1">
    <property type="entry name" value="BIFUNCTIONAL 3-DEHYDROQUINATE DEHYDRATASE_SHIKIMATE DEHYDROGENASE, CHLOROPLASTIC"/>
    <property type="match status" value="1"/>
</dbReference>
<dbReference type="PANTHER" id="PTHR21089">
    <property type="entry name" value="SHIKIMATE DEHYDROGENASE"/>
    <property type="match status" value="1"/>
</dbReference>
<dbReference type="Pfam" id="PF08501">
    <property type="entry name" value="Shikimate_dh_N"/>
    <property type="match status" value="1"/>
</dbReference>
<dbReference type="SUPFAM" id="SSF53223">
    <property type="entry name" value="Aminoacid dehydrogenase-like, N-terminal domain"/>
    <property type="match status" value="1"/>
</dbReference>
<dbReference type="SUPFAM" id="SSF51735">
    <property type="entry name" value="NAD(P)-binding Rossmann-fold domains"/>
    <property type="match status" value="1"/>
</dbReference>
<feature type="chain" id="PRO_0000136007" description="Shikimate dehydrogenase (NADP(+))">
    <location>
        <begin position="1"/>
        <end position="263"/>
    </location>
</feature>
<feature type="active site" description="Proton acceptor" evidence="1 5 6">
    <location>
        <position position="69"/>
    </location>
</feature>
<feature type="binding site" evidence="1 2 3 4">
    <location>
        <begin position="16"/>
        <end position="18"/>
    </location>
    <ligand>
        <name>shikimate</name>
        <dbReference type="ChEBI" id="CHEBI:36208"/>
    </ligand>
</feature>
<feature type="binding site" evidence="1 2 3 4">
    <location>
        <position position="65"/>
    </location>
    <ligand>
        <name>shikimate</name>
        <dbReference type="ChEBI" id="CHEBI:36208"/>
    </ligand>
</feature>
<feature type="binding site" evidence="1 2 3">
    <location>
        <position position="90"/>
    </location>
    <ligand>
        <name>shikimate</name>
        <dbReference type="ChEBI" id="CHEBI:36208"/>
    </ligand>
</feature>
<feature type="binding site" evidence="1 2 3">
    <location>
        <position position="105"/>
    </location>
    <ligand>
        <name>shikimate</name>
        <dbReference type="ChEBI" id="CHEBI:36208"/>
    </ligand>
</feature>
<feature type="binding site" evidence="1 2">
    <location>
        <begin position="125"/>
        <end position="129"/>
    </location>
    <ligand>
        <name>NADP(+)</name>
        <dbReference type="ChEBI" id="CHEBI:58349"/>
    </ligand>
</feature>
<feature type="binding site" evidence="2">
    <location>
        <position position="181"/>
    </location>
    <ligand>
        <name>NADP(+)</name>
        <dbReference type="ChEBI" id="CHEBI:58349"/>
    </ligand>
</feature>
<feature type="binding site" evidence="1">
    <location>
        <position position="208"/>
    </location>
    <ligand>
        <name>NADP(+)</name>
        <dbReference type="ChEBI" id="CHEBI:58349"/>
    </ligand>
</feature>
<feature type="binding site" evidence="1 2 4">
    <location>
        <position position="210"/>
    </location>
    <ligand>
        <name>shikimate</name>
        <dbReference type="ChEBI" id="CHEBI:36208"/>
    </ligand>
</feature>
<feature type="binding site" evidence="1 2">
    <location>
        <position position="230"/>
    </location>
    <ligand>
        <name>NADP(+)</name>
        <dbReference type="ChEBI" id="CHEBI:58349"/>
    </ligand>
</feature>
<feature type="binding site" evidence="1 2 3 4">
    <location>
        <position position="237"/>
    </location>
    <ligand>
        <name>shikimate</name>
        <dbReference type="ChEBI" id="CHEBI:36208"/>
    </ligand>
</feature>
<feature type="strand" evidence="8">
    <location>
        <begin position="3"/>
        <end position="12"/>
    </location>
</feature>
<feature type="helix" evidence="8">
    <location>
        <begin position="18"/>
        <end position="33"/>
    </location>
</feature>
<feature type="strand" evidence="8">
    <location>
        <begin position="34"/>
        <end position="43"/>
    </location>
</feature>
<feature type="strand" evidence="8">
    <location>
        <begin position="46"/>
        <end position="48"/>
    </location>
</feature>
<feature type="helix" evidence="8">
    <location>
        <begin position="50"/>
        <end position="56"/>
    </location>
</feature>
<feature type="strand" evidence="8">
    <location>
        <begin position="59"/>
        <end position="64"/>
    </location>
</feature>
<feature type="helix" evidence="8">
    <location>
        <begin position="69"/>
        <end position="75"/>
    </location>
</feature>
<feature type="strand" evidence="8">
    <location>
        <begin position="76"/>
        <end position="79"/>
    </location>
</feature>
<feature type="helix" evidence="8">
    <location>
        <begin position="81"/>
        <end position="85"/>
    </location>
</feature>
<feature type="strand" evidence="8">
    <location>
        <begin position="91"/>
        <end position="95"/>
    </location>
</feature>
<feature type="strand" evidence="8">
    <location>
        <begin position="98"/>
        <end position="102"/>
    </location>
</feature>
<feature type="helix" evidence="8">
    <location>
        <begin position="105"/>
        <end position="112"/>
    </location>
</feature>
<feature type="strand" evidence="8">
    <location>
        <begin position="120"/>
        <end position="124"/>
    </location>
</feature>
<feature type="helix" evidence="8">
    <location>
        <begin position="128"/>
        <end position="139"/>
    </location>
</feature>
<feature type="strand" evidence="8">
    <location>
        <begin position="143"/>
        <end position="147"/>
    </location>
</feature>
<feature type="strand" evidence="7">
    <location>
        <begin position="149"/>
        <end position="151"/>
    </location>
</feature>
<feature type="helix" evidence="8">
    <location>
        <begin position="154"/>
        <end position="160"/>
    </location>
</feature>
<feature type="strand" evidence="8">
    <location>
        <begin position="163"/>
        <end position="167"/>
    </location>
</feature>
<feature type="strand" evidence="8">
    <location>
        <begin position="174"/>
        <end position="178"/>
    </location>
</feature>
<feature type="helix" evidence="7">
    <location>
        <begin position="183"/>
        <end position="185"/>
    </location>
</feature>
<feature type="helix" evidence="8">
    <location>
        <begin position="192"/>
        <end position="201"/>
    </location>
</feature>
<feature type="strand" evidence="8">
    <location>
        <begin position="203"/>
        <end position="208"/>
    </location>
</feature>
<feature type="helix" evidence="8">
    <location>
        <begin position="215"/>
        <end position="222"/>
    </location>
</feature>
<feature type="helix" evidence="8">
    <location>
        <begin position="231"/>
        <end position="245"/>
    </location>
</feature>
<feature type="turn" evidence="8">
    <location>
        <begin position="246"/>
        <end position="248"/>
    </location>
</feature>
<feature type="helix" evidence="8">
    <location>
        <begin position="252"/>
        <end position="262"/>
    </location>
</feature>
<evidence type="ECO:0000255" key="1">
    <source>
        <dbReference type="HAMAP-Rule" id="MF_00222"/>
    </source>
</evidence>
<evidence type="ECO:0000269" key="2">
    <source ref="2"/>
</evidence>
<evidence type="ECO:0000269" key="3">
    <source ref="3"/>
</evidence>
<evidence type="ECO:0000269" key="4">
    <source ref="4"/>
</evidence>
<evidence type="ECO:0000305" key="5">
    <source ref="2"/>
</evidence>
<evidence type="ECO:0000305" key="6">
    <source ref="3"/>
</evidence>
<evidence type="ECO:0007829" key="7">
    <source>
        <dbReference type="PDB" id="3PHG"/>
    </source>
</evidence>
<evidence type="ECO:0007829" key="8">
    <source>
        <dbReference type="PDB" id="3PHH"/>
    </source>
</evidence>
<accession>P56119</accession>
<keyword id="KW-0002">3D-structure</keyword>
<keyword id="KW-0028">Amino-acid biosynthesis</keyword>
<keyword id="KW-0057">Aromatic amino acid biosynthesis</keyword>
<keyword id="KW-0521">NADP</keyword>
<keyword id="KW-0560">Oxidoreductase</keyword>
<keyword id="KW-1185">Reference proteome</keyword>
<gene>
    <name evidence="1" type="primary">aroE</name>
    <name type="ordered locus">HP_1249</name>
</gene>
<organism>
    <name type="scientific">Helicobacter pylori (strain ATCC 700392 / 26695)</name>
    <name type="common">Campylobacter pylori</name>
    <dbReference type="NCBI Taxonomy" id="85962"/>
    <lineage>
        <taxon>Bacteria</taxon>
        <taxon>Pseudomonadati</taxon>
        <taxon>Campylobacterota</taxon>
        <taxon>Epsilonproteobacteria</taxon>
        <taxon>Campylobacterales</taxon>
        <taxon>Helicobacteraceae</taxon>
        <taxon>Helicobacter</taxon>
    </lineage>
</organism>
<protein>
    <recommendedName>
        <fullName evidence="1">Shikimate dehydrogenase (NADP(+))</fullName>
        <shortName evidence="1">SDH</shortName>
        <ecNumber evidence="1">1.1.1.25</ecNumber>
    </recommendedName>
</protein>
<reference key="1">
    <citation type="journal article" date="1997" name="Nature">
        <title>The complete genome sequence of the gastric pathogen Helicobacter pylori.</title>
        <authorList>
            <person name="Tomb J.-F."/>
            <person name="White O."/>
            <person name="Kerlavage A.R."/>
            <person name="Clayton R.A."/>
            <person name="Sutton G.G."/>
            <person name="Fleischmann R.D."/>
            <person name="Ketchum K.A."/>
            <person name="Klenk H.-P."/>
            <person name="Gill S.R."/>
            <person name="Dougherty B.A."/>
            <person name="Nelson K.E."/>
            <person name="Quackenbush J."/>
            <person name="Zhou L."/>
            <person name="Kirkness E.F."/>
            <person name="Peterson S.N."/>
            <person name="Loftus B.J."/>
            <person name="Richardson D.L."/>
            <person name="Dodson R.J."/>
            <person name="Khalak H.G."/>
            <person name="Glodek A."/>
            <person name="McKenney K."/>
            <person name="FitzGerald L.M."/>
            <person name="Lee N."/>
            <person name="Adams M.D."/>
            <person name="Hickey E.K."/>
            <person name="Berg D.E."/>
            <person name="Gocayne J.D."/>
            <person name="Utterback T.R."/>
            <person name="Peterson J.D."/>
            <person name="Kelley J.M."/>
            <person name="Cotton M.D."/>
            <person name="Weidman J.F."/>
            <person name="Fujii C."/>
            <person name="Bowman C."/>
            <person name="Watthey L."/>
            <person name="Wallin E."/>
            <person name="Hayes W.S."/>
            <person name="Borodovsky M."/>
            <person name="Karp P.D."/>
            <person name="Smith H.O."/>
            <person name="Fraser C.M."/>
            <person name="Venter J.C."/>
        </authorList>
    </citation>
    <scope>NUCLEOTIDE SEQUENCE [LARGE SCALE GENOMIC DNA]</scope>
    <source>
        <strain>ATCC 700392 / 26695</strain>
    </source>
</reference>
<reference key="2">
    <citation type="submission" date="2011-11" db="PDB data bank">
        <title>Crystal structure of the shikimate 5-dehydrogenase (aroE) from Helicobacter pylori in complex with shikimate and NADPH.</title>
        <authorList>
            <person name="Cheng W.C."/>
            <person name="Lin S.C."/>
            <person name="Wang W.C."/>
        </authorList>
    </citation>
    <scope>X-RAY CRYSTALLOGRAPHY (1.42 ANGSTROMS) IN COMPLEX WITH SHIKIMATE AND NADP</scope>
    <scope>SUBUNIT</scope>
</reference>
<reference key="3">
    <citation type="submission" date="2012-12" db="PDB data bank">
        <title>Crystal structure of shikimate dehydrogenase (aroE) mutants from Helicobacter pylori in complex with shikimate.</title>
        <authorList>
            <person name="Cheng W.C."/>
            <person name="Lin S.C."/>
            <person name="Wang W.C."/>
        </authorList>
    </citation>
    <scope>X-RAY CRYSTALLOGRAPHY (1.72 ANGSTROMS) IN COMPLEX WITH SHIKIMATE</scope>
    <scope>SUBUNIT</scope>
</reference>
<reference key="4">
    <citation type="submission" date="2013-01" db="PDB data bank">
        <title>Crystal structure of shikimate dehydrogenase (aroE) clinical v2356 from Helicobacter pylori in complex with shikimate.</title>
        <authorList>
            <person name="Cheng W.C."/>
            <person name="Chen T.J."/>
            <person name="Wang W.C."/>
        </authorList>
    </citation>
    <scope>X-RAY CRYSTALLOGRAPHY (2.85 ANGSTROMS) IN COMPLEX WITH SHIKIMATE</scope>
</reference>